<accession>P0DJQ6</accession>
<accession>Q53940</accession>
<organism>
    <name type="scientific">Streptomyces clavuligerus</name>
    <dbReference type="NCBI Taxonomy" id="1901"/>
    <lineage>
        <taxon>Bacteria</taxon>
        <taxon>Bacillati</taxon>
        <taxon>Actinomycetota</taxon>
        <taxon>Actinomycetes</taxon>
        <taxon>Kitasatosporales</taxon>
        <taxon>Streptomycetaceae</taxon>
        <taxon>Streptomyces</taxon>
    </lineage>
</organism>
<dbReference type="EC" id="2.3.1.35" evidence="1"/>
<dbReference type="EC" id="2.3.1.1" evidence="1"/>
<dbReference type="EMBL" id="U87786">
    <property type="protein sequence ID" value="AAF86622.1"/>
    <property type="molecule type" value="Genomic_DNA"/>
</dbReference>
<dbReference type="RefSeq" id="WP_003952513.1">
    <property type="nucleotide sequence ID" value="NZ_CM000913.1"/>
</dbReference>
<dbReference type="SMR" id="P0DJQ6"/>
<dbReference type="STRING" id="1901.BB341_07825"/>
<dbReference type="GeneID" id="93729328"/>
<dbReference type="eggNOG" id="COG1364">
    <property type="taxonomic scope" value="Bacteria"/>
</dbReference>
<dbReference type="OrthoDB" id="9804242at2"/>
<dbReference type="UniPathway" id="UPA00068">
    <property type="reaction ID" value="UER00106"/>
</dbReference>
<dbReference type="UniPathway" id="UPA00068">
    <property type="reaction ID" value="UER00111"/>
</dbReference>
<dbReference type="GO" id="GO:0005737">
    <property type="term" value="C:cytoplasm"/>
    <property type="evidence" value="ECO:0007669"/>
    <property type="project" value="UniProtKB-SubCell"/>
</dbReference>
<dbReference type="GO" id="GO:0004358">
    <property type="term" value="F:glutamate N-acetyltransferase activity"/>
    <property type="evidence" value="ECO:0007669"/>
    <property type="project" value="UniProtKB-UniRule"/>
</dbReference>
<dbReference type="GO" id="GO:0004042">
    <property type="term" value="F:L-glutamate N-acetyltransferase activity"/>
    <property type="evidence" value="ECO:0007669"/>
    <property type="project" value="UniProtKB-UniRule"/>
</dbReference>
<dbReference type="GO" id="GO:0006526">
    <property type="term" value="P:L-arginine biosynthetic process"/>
    <property type="evidence" value="ECO:0007669"/>
    <property type="project" value="UniProtKB-UniRule"/>
</dbReference>
<dbReference type="GO" id="GO:0006592">
    <property type="term" value="P:ornithine biosynthetic process"/>
    <property type="evidence" value="ECO:0007669"/>
    <property type="project" value="TreeGrafter"/>
</dbReference>
<dbReference type="CDD" id="cd02152">
    <property type="entry name" value="OAT"/>
    <property type="match status" value="1"/>
</dbReference>
<dbReference type="FunFam" id="3.10.20.340:FF:000003">
    <property type="entry name" value="Arginine biosynthesis bifunctional protein ArgJ"/>
    <property type="match status" value="1"/>
</dbReference>
<dbReference type="Gene3D" id="3.10.20.340">
    <property type="entry name" value="ArgJ beta chain, C-terminal domain"/>
    <property type="match status" value="1"/>
</dbReference>
<dbReference type="Gene3D" id="3.60.70.12">
    <property type="entry name" value="L-amino peptidase D-ALA esterase/amidase"/>
    <property type="match status" value="1"/>
</dbReference>
<dbReference type="HAMAP" id="MF_01106">
    <property type="entry name" value="ArgJ"/>
    <property type="match status" value="1"/>
</dbReference>
<dbReference type="InterPro" id="IPR002813">
    <property type="entry name" value="Arg_biosynth_ArgJ"/>
</dbReference>
<dbReference type="InterPro" id="IPR016117">
    <property type="entry name" value="ArgJ-like_dom_sf"/>
</dbReference>
<dbReference type="InterPro" id="IPR042195">
    <property type="entry name" value="ArgJ_beta_C"/>
</dbReference>
<dbReference type="NCBIfam" id="TIGR00120">
    <property type="entry name" value="ArgJ"/>
    <property type="match status" value="1"/>
</dbReference>
<dbReference type="NCBIfam" id="NF003802">
    <property type="entry name" value="PRK05388.1"/>
    <property type="match status" value="1"/>
</dbReference>
<dbReference type="PANTHER" id="PTHR23100">
    <property type="entry name" value="ARGININE BIOSYNTHESIS BIFUNCTIONAL PROTEIN ARGJ"/>
    <property type="match status" value="1"/>
</dbReference>
<dbReference type="PANTHER" id="PTHR23100:SF0">
    <property type="entry name" value="ARGININE BIOSYNTHESIS BIFUNCTIONAL PROTEIN ARGJ, MITOCHONDRIAL"/>
    <property type="match status" value="1"/>
</dbReference>
<dbReference type="Pfam" id="PF01960">
    <property type="entry name" value="ArgJ"/>
    <property type="match status" value="1"/>
</dbReference>
<dbReference type="SUPFAM" id="SSF56266">
    <property type="entry name" value="DmpA/ArgJ-like"/>
    <property type="match status" value="1"/>
</dbReference>
<gene>
    <name evidence="1" type="primary">argJ3</name>
    <name type="synonym">oat2</name>
</gene>
<protein>
    <recommendedName>
        <fullName evidence="1">Arginine biosynthesis bifunctional protein ArgJ 3</fullName>
    </recommendedName>
    <domain>
        <recommendedName>
            <fullName evidence="1">Glutamate N-acetyltransferase 3</fullName>
            <ecNumber evidence="1">2.3.1.35</ecNumber>
        </recommendedName>
        <alternativeName>
            <fullName evidence="1">Ornithine acetyltransferase 3</fullName>
            <shortName evidence="1">OATase 3</shortName>
        </alternativeName>
        <alternativeName>
            <fullName evidence="1">Ornithine transacetylase 3</fullName>
        </alternativeName>
    </domain>
    <domain>
        <recommendedName>
            <fullName evidence="1">Amino-acid acetyltransferase 3</fullName>
            <ecNumber evidence="1">2.3.1.1</ecNumber>
        </recommendedName>
        <alternativeName>
            <fullName evidence="1">N-acetylglutamate synthase 3</fullName>
            <shortName evidence="1">AGSase 3</shortName>
        </alternativeName>
    </domain>
    <component>
        <recommendedName>
            <fullName evidence="1">Arginine biosynthesis bifunctional protein ArgJ alpha chain 3</fullName>
        </recommendedName>
    </component>
    <component>
        <recommendedName>
            <fullName evidence="1">Arginine biosynthesis bifunctional protein ArgJ beta chain 3</fullName>
        </recommendedName>
    </component>
</protein>
<comment type="function">
    <text evidence="1">Catalyzes two activities which are involved in the cyclic version of arginine biosynthesis: the synthesis of N-acetylglutamate from glutamate and acetyl-CoA as the acetyl donor, and of ornithine by transacetylation between N(2)-acetylornithine and glutamate.</text>
</comment>
<comment type="catalytic activity">
    <reaction evidence="1">
        <text>N(2)-acetyl-L-ornithine + L-glutamate = N-acetyl-L-glutamate + L-ornithine</text>
        <dbReference type="Rhea" id="RHEA:15349"/>
        <dbReference type="ChEBI" id="CHEBI:29985"/>
        <dbReference type="ChEBI" id="CHEBI:44337"/>
        <dbReference type="ChEBI" id="CHEBI:46911"/>
        <dbReference type="ChEBI" id="CHEBI:57805"/>
        <dbReference type="EC" id="2.3.1.35"/>
    </reaction>
</comment>
<comment type="catalytic activity">
    <reaction evidence="1">
        <text>L-glutamate + acetyl-CoA = N-acetyl-L-glutamate + CoA + H(+)</text>
        <dbReference type="Rhea" id="RHEA:24292"/>
        <dbReference type="ChEBI" id="CHEBI:15378"/>
        <dbReference type="ChEBI" id="CHEBI:29985"/>
        <dbReference type="ChEBI" id="CHEBI:44337"/>
        <dbReference type="ChEBI" id="CHEBI:57287"/>
        <dbReference type="ChEBI" id="CHEBI:57288"/>
        <dbReference type="EC" id="2.3.1.1"/>
    </reaction>
</comment>
<comment type="pathway">
    <text evidence="1">Amino-acid biosynthesis; L-arginine biosynthesis; L-ornithine and N-acetyl-L-glutamate from L-glutamate and N(2)-acetyl-L-ornithine (cyclic): step 1/1.</text>
</comment>
<comment type="pathway">
    <text evidence="1">Amino-acid biosynthesis; L-arginine biosynthesis; N(2)-acetyl-L-ornithine from L-glutamate: step 1/4.</text>
</comment>
<comment type="subunit">
    <text evidence="1">Heterotetramer of two alpha and two beta chains.</text>
</comment>
<comment type="subcellular location">
    <subcellularLocation>
        <location evidence="1">Cytoplasm</location>
    </subcellularLocation>
</comment>
<comment type="similarity">
    <text evidence="1">Belongs to the ArgJ family.</text>
</comment>
<feature type="chain" id="PRO_0000419086" description="Arginine biosynthesis bifunctional protein ArgJ alpha chain 3" evidence="1">
    <location>
        <begin position="1"/>
        <end position="180"/>
    </location>
</feature>
<feature type="chain" id="PRO_0000419087" description="Arginine biosynthesis bifunctional protein ArgJ beta chain 3" evidence="1">
    <location>
        <begin position="181"/>
        <end position="393"/>
    </location>
</feature>
<feature type="active site" description="Nucleophile" evidence="1">
    <location>
        <position position="181"/>
    </location>
</feature>
<feature type="binding site" evidence="1">
    <location>
        <position position="148"/>
    </location>
    <ligand>
        <name>substrate</name>
    </ligand>
</feature>
<feature type="binding site" evidence="1">
    <location>
        <position position="170"/>
    </location>
    <ligand>
        <name>substrate</name>
    </ligand>
</feature>
<feature type="binding site" evidence="1">
    <location>
        <position position="181"/>
    </location>
    <ligand>
        <name>substrate</name>
    </ligand>
</feature>
<feature type="binding site" evidence="1">
    <location>
        <position position="260"/>
    </location>
    <ligand>
        <name>substrate</name>
    </ligand>
</feature>
<feature type="binding site" evidence="1">
    <location>
        <position position="388"/>
    </location>
    <ligand>
        <name>substrate</name>
    </ligand>
</feature>
<feature type="binding site" evidence="1">
    <location>
        <position position="393"/>
    </location>
    <ligand>
        <name>substrate</name>
    </ligand>
</feature>
<feature type="site" description="Involved in the stabilization of negative charge on the oxyanion by the formation of the oxyanion hole" evidence="1">
    <location>
        <position position="111"/>
    </location>
</feature>
<feature type="site" description="Involved in the stabilization of negative charge on the oxyanion by the formation of the oxyanion hole" evidence="1">
    <location>
        <position position="112"/>
    </location>
</feature>
<feature type="site" description="Cleavage; by autolysis" evidence="1">
    <location>
        <begin position="180"/>
        <end position="181"/>
    </location>
</feature>
<sequence>MSDSTPKTPRGFVVHTAPVGLADDGRDDFTVLASTAPATVSAVFTRSRFAGPSVVLCREAVADGQARGVVVLARNANVATGLEGEENAREVREAVARALGLPEGEMLIASTGVIGRQYPMESIREHLKTLEWPAGEGGFDRAARAIMTTDTRPKEVRVSVGGATLVGIAKGVGMLEPDMATLLTFFATDARLDPAEQDRLFRRVMDRTFNAVSIDTDTSTSDTAVLFANGLAGEVDAGEFEEALHTAALALVKDIASDGEGAAKLIEVQVTGARDDAQAKRVGKTVVNSPLVKTAVHGCDPNWGRVAMAIGKCSDDTDIDQERVTIRFGEVEVYPPKARGDQADDALRAAVAEHLRGDEVVIGIDLAIADGAFTVYGCDLTEGYVRLNSEYTT</sequence>
<proteinExistence type="inferred from homology"/>
<name>ARGJ3_STRCL</name>
<reference key="1">
    <citation type="journal article" date="2000" name="Antimicrob. Agents Chemother.">
        <title>Enzymes catalyzing the early steps of clavulanic acid biosynthesis are encoded by two sets of paralogous genes in Streptomyces clavuligerus.</title>
        <authorList>
            <person name="Jensen S.E."/>
            <person name="Elder K.J."/>
            <person name="Aidoo K.A."/>
            <person name="Paradkar A.S."/>
        </authorList>
    </citation>
    <scope>NUCLEOTIDE SEQUENCE [GENOMIC DNA]</scope>
    <source>
        <strain>ATCC 27064 / DSM 738 / JCM 4710 / NBRC 13307 / NCIMB 12785 / NRRL 3585 / VKM Ac-602</strain>
    </source>
</reference>
<reference key="2">
    <citation type="journal article" date="2004" name="Antimicrob. Agents Chemother.">
        <title>Two sets of paralogous genes encode the enzymes involved in the early stages of clavulanic acid and clavam metabolite biosynthesis in Streptomyces clavuligerus.</title>
        <authorList>
            <person name="Tahlan K."/>
            <person name="Park H.-U."/>
            <person name="Wong A."/>
            <person name="Beatty P.H."/>
            <person name="Jensen S.E."/>
        </authorList>
    </citation>
    <scope>PRESENCE OF PARALOGS</scope>
    <source>
        <strain>ATCC 27064 / DSM 738 / JCM 4710 / NBRC 13307 / NCIMB 12785 / NRRL 3585 / VKM Ac-602</strain>
    </source>
</reference>
<keyword id="KW-0012">Acyltransferase</keyword>
<keyword id="KW-0028">Amino-acid biosynthesis</keyword>
<keyword id="KW-0055">Arginine biosynthesis</keyword>
<keyword id="KW-0068">Autocatalytic cleavage</keyword>
<keyword id="KW-0963">Cytoplasm</keyword>
<keyword id="KW-0511">Multifunctional enzyme</keyword>
<keyword id="KW-0808">Transferase</keyword>
<evidence type="ECO:0000255" key="1">
    <source>
        <dbReference type="HAMAP-Rule" id="MF_01106"/>
    </source>
</evidence>